<protein>
    <recommendedName>
        <fullName evidence="2">Small ribosomal subunit protein uS19</fullName>
    </recommendedName>
    <alternativeName>
        <fullName>30S ribosomal protein S19</fullName>
    </alternativeName>
</protein>
<gene>
    <name type="primary">rpsS</name>
    <name type="ordered locus">YPTB3694</name>
</gene>
<evidence type="ECO:0000250" key="1"/>
<evidence type="ECO:0000305" key="2"/>
<keyword id="KW-0687">Ribonucleoprotein</keyword>
<keyword id="KW-0689">Ribosomal protein</keyword>
<keyword id="KW-0694">RNA-binding</keyword>
<keyword id="KW-0699">rRNA-binding</keyword>
<accession>P11256</accession>
<accession>Q664S5</accession>
<organism>
    <name type="scientific">Yersinia pseudotuberculosis serotype I (strain IP32953)</name>
    <dbReference type="NCBI Taxonomy" id="273123"/>
    <lineage>
        <taxon>Bacteria</taxon>
        <taxon>Pseudomonadati</taxon>
        <taxon>Pseudomonadota</taxon>
        <taxon>Gammaproteobacteria</taxon>
        <taxon>Enterobacterales</taxon>
        <taxon>Yersiniaceae</taxon>
        <taxon>Yersinia</taxon>
    </lineage>
</organism>
<reference key="1">
    <citation type="journal article" date="2004" name="Proc. Natl. Acad. Sci. U.S.A.">
        <title>Insights into the evolution of Yersinia pestis through whole-genome comparison with Yersinia pseudotuberculosis.</title>
        <authorList>
            <person name="Chain P.S.G."/>
            <person name="Carniel E."/>
            <person name="Larimer F.W."/>
            <person name="Lamerdin J."/>
            <person name="Stoutland P.O."/>
            <person name="Regala W.M."/>
            <person name="Georgescu A.M."/>
            <person name="Vergez L.M."/>
            <person name="Land M.L."/>
            <person name="Motin V.L."/>
            <person name="Brubaker R.R."/>
            <person name="Fowler J."/>
            <person name="Hinnebusch J."/>
            <person name="Marceau M."/>
            <person name="Medigue C."/>
            <person name="Simonet M."/>
            <person name="Chenal-Francisque V."/>
            <person name="Souza B."/>
            <person name="Dacheux D."/>
            <person name="Elliott J.M."/>
            <person name="Derbise A."/>
            <person name="Hauser L.J."/>
            <person name="Garcia E."/>
        </authorList>
    </citation>
    <scope>NUCLEOTIDE SEQUENCE [LARGE SCALE GENOMIC DNA]</scope>
    <source>
        <strain>IP32953</strain>
    </source>
</reference>
<reference key="2">
    <citation type="journal article" date="1989" name="Nucleic Acids Res.">
        <title>High degree of conservation between ribosomal proteins of Yersinia pseudotuberculosis and Escherichia coli.</title>
        <authorList>
            <person name="Gross U."/>
            <person name="Chen J.H."/>
            <person name="Kono D.H."/>
            <person name="Lobo J.G."/>
            <person name="Yu D.T.Y."/>
        </authorList>
    </citation>
    <scope>NUCLEOTIDE SEQUENCE [GENOMIC DNA] OF 1-74</scope>
</reference>
<proteinExistence type="inferred from homology"/>
<feature type="initiator methionine" description="Removed" evidence="1">
    <location>
        <position position="1"/>
    </location>
</feature>
<feature type="chain" id="PRO_0000129948" description="Small ribosomal subunit protein uS19">
    <location>
        <begin position="2"/>
        <end position="92"/>
    </location>
</feature>
<dbReference type="EMBL" id="BX936398">
    <property type="protein sequence ID" value="CAH22932.1"/>
    <property type="molecule type" value="Genomic_DNA"/>
</dbReference>
<dbReference type="EMBL" id="X14363">
    <property type="protein sequence ID" value="CAA32546.1"/>
    <property type="molecule type" value="Genomic_DNA"/>
</dbReference>
<dbReference type="PIR" id="S04144">
    <property type="entry name" value="S04144"/>
</dbReference>
<dbReference type="RefSeq" id="WP_002213430.1">
    <property type="nucleotide sequence ID" value="NZ_CP009712.1"/>
</dbReference>
<dbReference type="SMR" id="P11256"/>
<dbReference type="GeneID" id="97454235"/>
<dbReference type="KEGG" id="ypo:BZ17_2893"/>
<dbReference type="KEGG" id="yps:YPTB3694"/>
<dbReference type="PATRIC" id="fig|273123.14.peg.3034"/>
<dbReference type="Proteomes" id="UP000001011">
    <property type="component" value="Chromosome"/>
</dbReference>
<dbReference type="GO" id="GO:0005737">
    <property type="term" value="C:cytoplasm"/>
    <property type="evidence" value="ECO:0007669"/>
    <property type="project" value="UniProtKB-ARBA"/>
</dbReference>
<dbReference type="GO" id="GO:0015935">
    <property type="term" value="C:small ribosomal subunit"/>
    <property type="evidence" value="ECO:0007669"/>
    <property type="project" value="InterPro"/>
</dbReference>
<dbReference type="GO" id="GO:0019843">
    <property type="term" value="F:rRNA binding"/>
    <property type="evidence" value="ECO:0007669"/>
    <property type="project" value="UniProtKB-UniRule"/>
</dbReference>
<dbReference type="GO" id="GO:0003735">
    <property type="term" value="F:structural constituent of ribosome"/>
    <property type="evidence" value="ECO:0007669"/>
    <property type="project" value="InterPro"/>
</dbReference>
<dbReference type="GO" id="GO:0000028">
    <property type="term" value="P:ribosomal small subunit assembly"/>
    <property type="evidence" value="ECO:0007669"/>
    <property type="project" value="TreeGrafter"/>
</dbReference>
<dbReference type="GO" id="GO:0006412">
    <property type="term" value="P:translation"/>
    <property type="evidence" value="ECO:0007669"/>
    <property type="project" value="UniProtKB-UniRule"/>
</dbReference>
<dbReference type="FunFam" id="3.30.860.10:FF:000001">
    <property type="entry name" value="30S ribosomal protein S19"/>
    <property type="match status" value="1"/>
</dbReference>
<dbReference type="Gene3D" id="3.30.860.10">
    <property type="entry name" value="30s Ribosomal Protein S19, Chain A"/>
    <property type="match status" value="1"/>
</dbReference>
<dbReference type="HAMAP" id="MF_00531">
    <property type="entry name" value="Ribosomal_uS19"/>
    <property type="match status" value="1"/>
</dbReference>
<dbReference type="InterPro" id="IPR002222">
    <property type="entry name" value="Ribosomal_uS19"/>
</dbReference>
<dbReference type="InterPro" id="IPR005732">
    <property type="entry name" value="Ribosomal_uS19_bac-type"/>
</dbReference>
<dbReference type="InterPro" id="IPR020934">
    <property type="entry name" value="Ribosomal_uS19_CS"/>
</dbReference>
<dbReference type="InterPro" id="IPR023575">
    <property type="entry name" value="Ribosomal_uS19_SF"/>
</dbReference>
<dbReference type="NCBIfam" id="TIGR01050">
    <property type="entry name" value="rpsS_bact"/>
    <property type="match status" value="1"/>
</dbReference>
<dbReference type="PANTHER" id="PTHR11880">
    <property type="entry name" value="RIBOSOMAL PROTEIN S19P FAMILY MEMBER"/>
    <property type="match status" value="1"/>
</dbReference>
<dbReference type="PANTHER" id="PTHR11880:SF8">
    <property type="entry name" value="SMALL RIBOSOMAL SUBUNIT PROTEIN US19M"/>
    <property type="match status" value="1"/>
</dbReference>
<dbReference type="Pfam" id="PF00203">
    <property type="entry name" value="Ribosomal_S19"/>
    <property type="match status" value="1"/>
</dbReference>
<dbReference type="PIRSF" id="PIRSF002144">
    <property type="entry name" value="Ribosomal_S19"/>
    <property type="match status" value="1"/>
</dbReference>
<dbReference type="PRINTS" id="PR00975">
    <property type="entry name" value="RIBOSOMALS19"/>
</dbReference>
<dbReference type="SUPFAM" id="SSF54570">
    <property type="entry name" value="Ribosomal protein S19"/>
    <property type="match status" value="1"/>
</dbReference>
<dbReference type="PROSITE" id="PS00323">
    <property type="entry name" value="RIBOSOMAL_S19"/>
    <property type="match status" value="1"/>
</dbReference>
<name>RS19_YERPS</name>
<sequence length="92" mass="10430">MPRSLKKGPFIDLHLLKKVEKAVESGDKKPIRTWSRRSTVFPNMIGLTIAVHNGRQHVPVFVSDEMVGHKLGEFAPTRTYRGHAADKKAKKR</sequence>
<comment type="function">
    <text evidence="1">Protein S19 forms a complex with S13 that binds strongly to the 16S ribosomal RNA.</text>
</comment>
<comment type="similarity">
    <text evidence="2">Belongs to the universal ribosomal protein uS19 family.</text>
</comment>